<evidence type="ECO:0000255" key="1">
    <source>
        <dbReference type="HAMAP-Rule" id="MF_01663"/>
    </source>
</evidence>
<accession>A6KWR4</accession>
<comment type="function">
    <text evidence="1">Involved in the anomeric conversion of L-rhamnose.</text>
</comment>
<comment type="catalytic activity">
    <reaction evidence="1">
        <text>alpha-L-rhamnose = beta-L-rhamnose</text>
        <dbReference type="Rhea" id="RHEA:25584"/>
        <dbReference type="ChEBI" id="CHEBI:27586"/>
        <dbReference type="ChEBI" id="CHEBI:27907"/>
        <dbReference type="EC" id="5.1.3.32"/>
    </reaction>
</comment>
<comment type="pathway">
    <text evidence="1">Carbohydrate metabolism; L-rhamnose metabolism.</text>
</comment>
<comment type="subunit">
    <text evidence="1">Homodimer.</text>
</comment>
<comment type="subcellular location">
    <subcellularLocation>
        <location evidence="1">Cytoplasm</location>
    </subcellularLocation>
</comment>
<comment type="similarity">
    <text evidence="1">Belongs to the rhamnose mutarotase family.</text>
</comment>
<feature type="chain" id="PRO_0000344554" description="L-rhamnose mutarotase">
    <location>
        <begin position="1"/>
        <end position="104"/>
    </location>
</feature>
<feature type="active site" description="Proton donor" evidence="1">
    <location>
        <position position="22"/>
    </location>
</feature>
<feature type="binding site" evidence="1">
    <location>
        <position position="18"/>
    </location>
    <ligand>
        <name>substrate</name>
    </ligand>
</feature>
<feature type="binding site" evidence="1">
    <location>
        <position position="41"/>
    </location>
    <ligand>
        <name>substrate</name>
    </ligand>
</feature>
<feature type="binding site" evidence="1">
    <location>
        <begin position="76"/>
        <end position="77"/>
    </location>
    <ligand>
        <name>substrate</name>
    </ligand>
</feature>
<dbReference type="EC" id="5.1.3.32" evidence="1"/>
<dbReference type="EMBL" id="CP000139">
    <property type="protein sequence ID" value="ABR37878.1"/>
    <property type="molecule type" value="Genomic_DNA"/>
</dbReference>
<dbReference type="RefSeq" id="WP_005853508.1">
    <property type="nucleotide sequence ID" value="NZ_JANSWM010000057.1"/>
</dbReference>
<dbReference type="SMR" id="A6KWR4"/>
<dbReference type="STRING" id="435590.BVU_0150"/>
<dbReference type="PaxDb" id="435590-BVU_0150"/>
<dbReference type="GeneID" id="82155114"/>
<dbReference type="KEGG" id="bvu:BVU_0150"/>
<dbReference type="eggNOG" id="COG3254">
    <property type="taxonomic scope" value="Bacteria"/>
</dbReference>
<dbReference type="HOGENOM" id="CLU_100689_2_0_10"/>
<dbReference type="BioCyc" id="BVUL435590:G1G59-158-MONOMER"/>
<dbReference type="UniPathway" id="UPA00125"/>
<dbReference type="Proteomes" id="UP000002861">
    <property type="component" value="Chromosome"/>
</dbReference>
<dbReference type="GO" id="GO:0005737">
    <property type="term" value="C:cytoplasm"/>
    <property type="evidence" value="ECO:0007669"/>
    <property type="project" value="UniProtKB-SubCell"/>
</dbReference>
<dbReference type="GO" id="GO:0062192">
    <property type="term" value="F:L-rhamnose mutarotase activity"/>
    <property type="evidence" value="ECO:0007669"/>
    <property type="project" value="UniProtKB-EC"/>
</dbReference>
<dbReference type="GO" id="GO:0019301">
    <property type="term" value="P:rhamnose catabolic process"/>
    <property type="evidence" value="ECO:0007669"/>
    <property type="project" value="TreeGrafter"/>
</dbReference>
<dbReference type="Gene3D" id="3.30.70.100">
    <property type="match status" value="1"/>
</dbReference>
<dbReference type="HAMAP" id="MF_01663">
    <property type="entry name" value="L_rham_rotase"/>
    <property type="match status" value="1"/>
</dbReference>
<dbReference type="InterPro" id="IPR011008">
    <property type="entry name" value="Dimeric_a/b-barrel"/>
</dbReference>
<dbReference type="InterPro" id="IPR013448">
    <property type="entry name" value="L-rhamnose_mutarotase"/>
</dbReference>
<dbReference type="InterPro" id="IPR008000">
    <property type="entry name" value="Rham/fucose_mutarotase"/>
</dbReference>
<dbReference type="NCBIfam" id="TIGR02625">
    <property type="entry name" value="YiiL_rotase"/>
    <property type="match status" value="1"/>
</dbReference>
<dbReference type="PANTHER" id="PTHR34389">
    <property type="entry name" value="L-RHAMNOSE MUTAROTASE"/>
    <property type="match status" value="1"/>
</dbReference>
<dbReference type="PANTHER" id="PTHR34389:SF2">
    <property type="entry name" value="L-RHAMNOSE MUTAROTASE"/>
    <property type="match status" value="1"/>
</dbReference>
<dbReference type="Pfam" id="PF05336">
    <property type="entry name" value="rhaM"/>
    <property type="match status" value="1"/>
</dbReference>
<dbReference type="SUPFAM" id="SSF54909">
    <property type="entry name" value="Dimeric alpha+beta barrel"/>
    <property type="match status" value="1"/>
</dbReference>
<name>RHAM_PHOV8</name>
<proteinExistence type="inferred from homology"/>
<keyword id="KW-0119">Carbohydrate metabolism</keyword>
<keyword id="KW-0963">Cytoplasm</keyword>
<keyword id="KW-0413">Isomerase</keyword>
<keyword id="KW-0684">Rhamnose metabolism</keyword>
<sequence length="104" mass="12242">MKREAFKMFLKPGFEKEYEKRHAAIWPELKKMLSDGGVYDYSIYWDKDTNILFACQKTKGEESSQDMGANPIVQKWWDYMADIMEVNPDNSPVTIPLPEVFHMD</sequence>
<protein>
    <recommendedName>
        <fullName evidence="1">L-rhamnose mutarotase</fullName>
        <ecNumber evidence="1">5.1.3.32</ecNumber>
    </recommendedName>
    <alternativeName>
        <fullName evidence="1">Rhamnose 1-epimerase</fullName>
    </alternativeName>
    <alternativeName>
        <fullName evidence="1">Type-3 mutarotase</fullName>
    </alternativeName>
</protein>
<organism>
    <name type="scientific">Phocaeicola vulgatus (strain ATCC 8482 / DSM 1447 / JCM 5826 / CCUG 4940 / NBRC 14291 / NCTC 11154)</name>
    <name type="common">Bacteroides vulgatus</name>
    <dbReference type="NCBI Taxonomy" id="435590"/>
    <lineage>
        <taxon>Bacteria</taxon>
        <taxon>Pseudomonadati</taxon>
        <taxon>Bacteroidota</taxon>
        <taxon>Bacteroidia</taxon>
        <taxon>Bacteroidales</taxon>
        <taxon>Bacteroidaceae</taxon>
        <taxon>Phocaeicola</taxon>
    </lineage>
</organism>
<gene>
    <name evidence="1" type="primary">rhaM</name>
    <name type="ordered locus">BVU_0150</name>
</gene>
<reference key="1">
    <citation type="journal article" date="2007" name="PLoS Biol.">
        <title>Evolution of symbiotic bacteria in the distal human intestine.</title>
        <authorList>
            <person name="Xu J."/>
            <person name="Mahowald M.A."/>
            <person name="Ley R.E."/>
            <person name="Lozupone C.A."/>
            <person name="Hamady M."/>
            <person name="Martens E.C."/>
            <person name="Henrissat B."/>
            <person name="Coutinho P.M."/>
            <person name="Minx P."/>
            <person name="Latreille P."/>
            <person name="Cordum H."/>
            <person name="Van Brunt A."/>
            <person name="Kim K."/>
            <person name="Fulton R.S."/>
            <person name="Fulton L.A."/>
            <person name="Clifton S.W."/>
            <person name="Wilson R.K."/>
            <person name="Knight R.D."/>
            <person name="Gordon J.I."/>
        </authorList>
    </citation>
    <scope>NUCLEOTIDE SEQUENCE [LARGE SCALE GENOMIC DNA]</scope>
    <source>
        <strain>ATCC 8482 / DSM 1447 / JCM 5826 / CCUG 4940 / NBRC 14291 / NCTC 11154</strain>
    </source>
</reference>